<keyword id="KW-0249">Electron transport</keyword>
<keyword id="KW-0349">Heme</keyword>
<keyword id="KW-0408">Iron</keyword>
<keyword id="KW-0472">Membrane</keyword>
<keyword id="KW-0479">Metal-binding</keyword>
<keyword id="KW-0496">Mitochondrion</keyword>
<keyword id="KW-0999">Mitochondrion inner membrane</keyword>
<keyword id="KW-0679">Respiratory chain</keyword>
<keyword id="KW-0812">Transmembrane</keyword>
<keyword id="KW-1133">Transmembrane helix</keyword>
<keyword id="KW-0813">Transport</keyword>
<keyword id="KW-0830">Ubiquinone</keyword>
<name>CYB_VARVV</name>
<comment type="function">
    <text evidence="2">Component of the ubiquinol-cytochrome c reductase complex (complex III or cytochrome b-c1 complex) that is part of the mitochondrial respiratory chain. The b-c1 complex mediates electron transfer from ubiquinol to cytochrome c. Contributes to the generation of a proton gradient across the mitochondrial membrane that is then used for ATP synthesis.</text>
</comment>
<comment type="cofactor">
    <cofactor evidence="2">
        <name>heme b</name>
        <dbReference type="ChEBI" id="CHEBI:60344"/>
    </cofactor>
    <text evidence="2">Binds 2 heme b groups non-covalently.</text>
</comment>
<comment type="subunit">
    <text evidence="2">The cytochrome bc1 complex contains 11 subunits: 3 respiratory subunits (MT-CYB, CYC1 and UQCRFS1), 2 core proteins (UQCRC1 and UQCRC2) and 6 low-molecular weight proteins (UQCRH/QCR6, UQCRB/QCR7, UQCRQ/QCR8, UQCR10/QCR9, UQCR11/QCR10 and a cleavage product of UQCRFS1). This cytochrome bc1 complex then forms a dimer.</text>
</comment>
<comment type="subcellular location">
    <subcellularLocation>
        <location evidence="2">Mitochondrion inner membrane</location>
        <topology evidence="2">Multi-pass membrane protein</topology>
    </subcellularLocation>
</comment>
<comment type="miscellaneous">
    <text evidence="1">Heme 1 (or BL or b562) is low-potential and absorbs at about 562 nm, and heme 2 (or BH or b566) is high-potential and absorbs at about 566 nm.</text>
</comment>
<comment type="similarity">
    <text evidence="3 4">Belongs to the cytochrome b family.</text>
</comment>
<comment type="caution">
    <text evidence="2">The full-length protein contains only eight transmembrane helices, not nine as predicted by bioinformatics tools.</text>
</comment>
<reference key="1">
    <citation type="journal article" date="1999" name="Cladistics">
        <title>Phylogeny of the Lemuridae: effects of character and taxon sampling on the resolution of species relationships within Eulemur.</title>
        <authorList>
            <person name="Yoder A.D."/>
            <person name="Irwin J.A."/>
        </authorList>
    </citation>
    <scope>NUCLEOTIDE SEQUENCE [GENOMIC DNA]</scope>
    <source>
        <tissue>Muscle</tissue>
    </source>
</reference>
<sequence>MTNTRKNHPLMKIMNNSLIDLPAPSNISSWWNFGSLLGACLTLQIITGLFLAMHYTADTTTAFSSVTHICRDVNYGWIIRYLHANGASMFFLCLFIHIGRGLYYGSFTLLETWNVGIILLFTVMATAFMGYVLPWGQMSFWGATVITNLLSAIPYIGINLVEWIWGGFSVDKATXTRFFAFHLILPFIIMAXVMVHLLFLHETGSNXPLGTPSDSDKIPFHPYYTIKDXLGLLLLXLLAMTLVLFSXDLLXDPNNYMPANPLNTPPHIKPEWYFLFAXAILRSIPNKLGGVLALFFSILILAIIPLLHTAKQQSMIFRPLSQYLFWILIANLFTLTWIGGQPVEHPYIVIGQTASILYFSLILIIMPLVNLIENKMLKW</sequence>
<dbReference type="EMBL" id="AF081047">
    <property type="protein sequence ID" value="AAD13164.1"/>
    <property type="molecule type" value="Genomic_DNA"/>
</dbReference>
<dbReference type="GO" id="GO:0005743">
    <property type="term" value="C:mitochondrial inner membrane"/>
    <property type="evidence" value="ECO:0007669"/>
    <property type="project" value="UniProtKB-SubCell"/>
</dbReference>
<dbReference type="GO" id="GO:0045275">
    <property type="term" value="C:respiratory chain complex III"/>
    <property type="evidence" value="ECO:0007669"/>
    <property type="project" value="InterPro"/>
</dbReference>
<dbReference type="GO" id="GO:0046872">
    <property type="term" value="F:metal ion binding"/>
    <property type="evidence" value="ECO:0007669"/>
    <property type="project" value="UniProtKB-KW"/>
</dbReference>
<dbReference type="GO" id="GO:0008121">
    <property type="term" value="F:ubiquinol-cytochrome-c reductase activity"/>
    <property type="evidence" value="ECO:0007669"/>
    <property type="project" value="InterPro"/>
</dbReference>
<dbReference type="GO" id="GO:0006122">
    <property type="term" value="P:mitochondrial electron transport, ubiquinol to cytochrome c"/>
    <property type="evidence" value="ECO:0007669"/>
    <property type="project" value="TreeGrafter"/>
</dbReference>
<dbReference type="CDD" id="cd00290">
    <property type="entry name" value="cytochrome_b_C"/>
    <property type="match status" value="1"/>
</dbReference>
<dbReference type="CDD" id="cd00284">
    <property type="entry name" value="Cytochrome_b_N"/>
    <property type="match status" value="1"/>
</dbReference>
<dbReference type="FunFam" id="1.20.810.10:FF:000002">
    <property type="entry name" value="Cytochrome b"/>
    <property type="match status" value="1"/>
</dbReference>
<dbReference type="Gene3D" id="1.20.810.10">
    <property type="entry name" value="Cytochrome Bc1 Complex, Chain C"/>
    <property type="match status" value="1"/>
</dbReference>
<dbReference type="InterPro" id="IPR005798">
    <property type="entry name" value="Cyt_b/b6_C"/>
</dbReference>
<dbReference type="InterPro" id="IPR036150">
    <property type="entry name" value="Cyt_b/b6_C_sf"/>
</dbReference>
<dbReference type="InterPro" id="IPR005797">
    <property type="entry name" value="Cyt_b/b6_N"/>
</dbReference>
<dbReference type="InterPro" id="IPR027387">
    <property type="entry name" value="Cytb/b6-like_sf"/>
</dbReference>
<dbReference type="InterPro" id="IPR030689">
    <property type="entry name" value="Cytochrome_b"/>
</dbReference>
<dbReference type="InterPro" id="IPR048260">
    <property type="entry name" value="Cytochrome_b_C_euk/bac"/>
</dbReference>
<dbReference type="InterPro" id="IPR048259">
    <property type="entry name" value="Cytochrome_b_N_euk/bac"/>
</dbReference>
<dbReference type="InterPro" id="IPR016174">
    <property type="entry name" value="Di-haem_cyt_TM"/>
</dbReference>
<dbReference type="PANTHER" id="PTHR19271">
    <property type="entry name" value="CYTOCHROME B"/>
    <property type="match status" value="1"/>
</dbReference>
<dbReference type="PANTHER" id="PTHR19271:SF16">
    <property type="entry name" value="CYTOCHROME B"/>
    <property type="match status" value="1"/>
</dbReference>
<dbReference type="Pfam" id="PF00032">
    <property type="entry name" value="Cytochrom_B_C"/>
    <property type="match status" value="1"/>
</dbReference>
<dbReference type="Pfam" id="PF00033">
    <property type="entry name" value="Cytochrome_B"/>
    <property type="match status" value="1"/>
</dbReference>
<dbReference type="PIRSF" id="PIRSF038885">
    <property type="entry name" value="COB"/>
    <property type="match status" value="1"/>
</dbReference>
<dbReference type="SUPFAM" id="SSF81648">
    <property type="entry name" value="a domain/subunit of cytochrome bc1 complex (Ubiquinol-cytochrome c reductase)"/>
    <property type="match status" value="1"/>
</dbReference>
<dbReference type="SUPFAM" id="SSF81342">
    <property type="entry name" value="Transmembrane di-heme cytochromes"/>
    <property type="match status" value="1"/>
</dbReference>
<dbReference type="PROSITE" id="PS51003">
    <property type="entry name" value="CYTB_CTER"/>
    <property type="match status" value="1"/>
</dbReference>
<dbReference type="PROSITE" id="PS51002">
    <property type="entry name" value="CYTB_NTER"/>
    <property type="match status" value="1"/>
</dbReference>
<feature type="chain" id="PRO_0000061712" description="Cytochrome b">
    <location>
        <begin position="1"/>
        <end position="379"/>
    </location>
</feature>
<feature type="transmembrane region" description="Helical" evidence="2">
    <location>
        <begin position="33"/>
        <end position="53"/>
    </location>
</feature>
<feature type="transmembrane region" description="Helical" evidence="2">
    <location>
        <begin position="77"/>
        <end position="98"/>
    </location>
</feature>
<feature type="transmembrane region" description="Helical" evidence="2">
    <location>
        <begin position="113"/>
        <end position="133"/>
    </location>
</feature>
<feature type="transmembrane region" description="Helical" evidence="2">
    <location>
        <begin position="178"/>
        <end position="198"/>
    </location>
</feature>
<feature type="transmembrane region" description="Helical" evidence="2">
    <location>
        <begin position="226"/>
        <end position="246"/>
    </location>
</feature>
<feature type="transmembrane region" description="Helical" evidence="2">
    <location>
        <begin position="288"/>
        <end position="308"/>
    </location>
</feature>
<feature type="transmembrane region" description="Helical" evidence="2">
    <location>
        <begin position="320"/>
        <end position="340"/>
    </location>
</feature>
<feature type="transmembrane region" description="Helical" evidence="2">
    <location>
        <begin position="347"/>
        <end position="367"/>
    </location>
</feature>
<feature type="binding site" description="axial binding residue" evidence="2">
    <location>
        <position position="83"/>
    </location>
    <ligand>
        <name>heme b</name>
        <dbReference type="ChEBI" id="CHEBI:60344"/>
        <label>b562</label>
    </ligand>
    <ligandPart>
        <name>Fe</name>
        <dbReference type="ChEBI" id="CHEBI:18248"/>
    </ligandPart>
</feature>
<feature type="binding site" description="axial binding residue" evidence="2">
    <location>
        <position position="97"/>
    </location>
    <ligand>
        <name>heme b</name>
        <dbReference type="ChEBI" id="CHEBI:60344"/>
        <label>b566</label>
    </ligand>
    <ligandPart>
        <name>Fe</name>
        <dbReference type="ChEBI" id="CHEBI:18248"/>
    </ligandPart>
</feature>
<feature type="binding site" description="axial binding residue" evidence="2">
    <location>
        <position position="182"/>
    </location>
    <ligand>
        <name>heme b</name>
        <dbReference type="ChEBI" id="CHEBI:60344"/>
        <label>b562</label>
    </ligand>
    <ligandPart>
        <name>Fe</name>
        <dbReference type="ChEBI" id="CHEBI:18248"/>
    </ligandPart>
</feature>
<feature type="binding site" description="axial binding residue" evidence="2">
    <location>
        <position position="196"/>
    </location>
    <ligand>
        <name>heme b</name>
        <dbReference type="ChEBI" id="CHEBI:60344"/>
        <label>b566</label>
    </ligand>
    <ligandPart>
        <name>Fe</name>
        <dbReference type="ChEBI" id="CHEBI:18248"/>
    </ligandPart>
</feature>
<feature type="binding site" evidence="2">
    <location>
        <position position="201"/>
    </location>
    <ligand>
        <name>a ubiquinone</name>
        <dbReference type="ChEBI" id="CHEBI:16389"/>
    </ligand>
</feature>
<gene>
    <name type="primary">MT-CYB</name>
    <name type="synonym">COB</name>
    <name type="synonym">CYTB</name>
    <name type="synonym">MTCYB</name>
</gene>
<evidence type="ECO:0000250" key="1"/>
<evidence type="ECO:0000250" key="2">
    <source>
        <dbReference type="UniProtKB" id="P00157"/>
    </source>
</evidence>
<evidence type="ECO:0000255" key="3">
    <source>
        <dbReference type="PROSITE-ProRule" id="PRU00967"/>
    </source>
</evidence>
<evidence type="ECO:0000255" key="4">
    <source>
        <dbReference type="PROSITE-ProRule" id="PRU00968"/>
    </source>
</evidence>
<organism>
    <name type="scientific">Varecia variegata variegata</name>
    <name type="common">Black and white ruffed lemur</name>
    <dbReference type="NCBI Taxonomy" id="87289"/>
    <lineage>
        <taxon>Eukaryota</taxon>
        <taxon>Metazoa</taxon>
        <taxon>Chordata</taxon>
        <taxon>Craniata</taxon>
        <taxon>Vertebrata</taxon>
        <taxon>Euteleostomi</taxon>
        <taxon>Mammalia</taxon>
        <taxon>Eutheria</taxon>
        <taxon>Euarchontoglires</taxon>
        <taxon>Primates</taxon>
        <taxon>Strepsirrhini</taxon>
        <taxon>Lemuriformes</taxon>
        <taxon>Lemuridae</taxon>
        <taxon>Varecia</taxon>
    </lineage>
</organism>
<protein>
    <recommendedName>
        <fullName>Cytochrome b</fullName>
    </recommendedName>
    <alternativeName>
        <fullName>Complex III subunit 3</fullName>
    </alternativeName>
    <alternativeName>
        <fullName>Complex III subunit III</fullName>
    </alternativeName>
    <alternativeName>
        <fullName>Cytochrome b-c1 complex subunit 3</fullName>
    </alternativeName>
    <alternativeName>
        <fullName>Ubiquinol-cytochrome-c reductase complex cytochrome b subunit</fullName>
    </alternativeName>
</protein>
<geneLocation type="mitochondrion"/>
<proteinExistence type="inferred from homology"/>
<accession>O99795</accession>